<evidence type="ECO:0000255" key="1">
    <source>
        <dbReference type="HAMAP-Rule" id="MF_01916"/>
    </source>
</evidence>
<evidence type="ECO:0000305" key="2"/>
<feature type="chain" id="PRO_0000201276" description="Cardiolipin synthase 2">
    <location>
        <begin position="1"/>
        <end position="488"/>
    </location>
</feature>
<feature type="transmembrane region" description="Helical" evidence="1">
    <location>
        <begin position="8"/>
        <end position="28"/>
    </location>
</feature>
<feature type="transmembrane region" description="Helical" evidence="1">
    <location>
        <begin position="39"/>
        <end position="59"/>
    </location>
</feature>
<feature type="domain" description="PLD phosphodiesterase 1" evidence="1">
    <location>
        <begin position="223"/>
        <end position="250"/>
    </location>
</feature>
<feature type="domain" description="PLD phosphodiesterase 2" evidence="1">
    <location>
        <begin position="401"/>
        <end position="428"/>
    </location>
</feature>
<feature type="active site" evidence="1">
    <location>
        <position position="228"/>
    </location>
</feature>
<feature type="active site" evidence="1">
    <location>
        <position position="230"/>
    </location>
</feature>
<feature type="active site" evidence="1">
    <location>
        <position position="235"/>
    </location>
</feature>
<feature type="active site" evidence="1">
    <location>
        <position position="406"/>
    </location>
</feature>
<feature type="active site" evidence="1">
    <location>
        <position position="408"/>
    </location>
</feature>
<feature type="active site" evidence="1">
    <location>
        <position position="413"/>
    </location>
</feature>
<name>CLS2_STAES</name>
<proteinExistence type="inferred from homology"/>
<organism>
    <name type="scientific">Staphylococcus epidermidis (strain ATCC 12228 / FDA PCI 1200)</name>
    <dbReference type="NCBI Taxonomy" id="176280"/>
    <lineage>
        <taxon>Bacteria</taxon>
        <taxon>Bacillati</taxon>
        <taxon>Bacillota</taxon>
        <taxon>Bacilli</taxon>
        <taxon>Bacillales</taxon>
        <taxon>Staphylococcaceae</taxon>
        <taxon>Staphylococcus</taxon>
    </lineage>
</organism>
<dbReference type="EC" id="2.7.8.-" evidence="1"/>
<dbReference type="EMBL" id="AE015929">
    <property type="protein sequence ID" value="AAO05286.1"/>
    <property type="status" value="ALT_INIT"/>
    <property type="molecule type" value="Genomic_DNA"/>
</dbReference>
<dbReference type="RefSeq" id="NP_765242.1">
    <property type="nucleotide sequence ID" value="NC_004461.1"/>
</dbReference>
<dbReference type="SMR" id="Q8CNK3"/>
<dbReference type="DNASU" id="1057231"/>
<dbReference type="KEGG" id="sep:SE_1687"/>
<dbReference type="PATRIC" id="fig|176280.10.peg.1647"/>
<dbReference type="eggNOG" id="COG1502">
    <property type="taxonomic scope" value="Bacteria"/>
</dbReference>
<dbReference type="HOGENOM" id="CLU_038053_1_1_9"/>
<dbReference type="OrthoDB" id="9762009at2"/>
<dbReference type="Proteomes" id="UP000001411">
    <property type="component" value="Chromosome"/>
</dbReference>
<dbReference type="GO" id="GO:0005886">
    <property type="term" value="C:plasma membrane"/>
    <property type="evidence" value="ECO:0007669"/>
    <property type="project" value="UniProtKB-SubCell"/>
</dbReference>
<dbReference type="GO" id="GO:0008808">
    <property type="term" value="F:cardiolipin synthase activity"/>
    <property type="evidence" value="ECO:0007669"/>
    <property type="project" value="InterPro"/>
</dbReference>
<dbReference type="GO" id="GO:0032049">
    <property type="term" value="P:cardiolipin biosynthetic process"/>
    <property type="evidence" value="ECO:0007669"/>
    <property type="project" value="InterPro"/>
</dbReference>
<dbReference type="CDD" id="cd09110">
    <property type="entry name" value="PLDc_CLS_1"/>
    <property type="match status" value="1"/>
</dbReference>
<dbReference type="CDD" id="cd09112">
    <property type="entry name" value="PLDc_CLS_2"/>
    <property type="match status" value="1"/>
</dbReference>
<dbReference type="FunFam" id="3.30.870.10:FF:000014">
    <property type="entry name" value="Cardiolipin synthase"/>
    <property type="match status" value="1"/>
</dbReference>
<dbReference type="FunFam" id="3.30.870.10:FF:000021">
    <property type="entry name" value="Cardiolipin synthase"/>
    <property type="match status" value="1"/>
</dbReference>
<dbReference type="Gene3D" id="3.30.870.10">
    <property type="entry name" value="Endonuclease Chain A"/>
    <property type="match status" value="2"/>
</dbReference>
<dbReference type="HAMAP" id="MF_01916">
    <property type="entry name" value="Cardiolipin_synth_Cls"/>
    <property type="match status" value="1"/>
</dbReference>
<dbReference type="InterPro" id="IPR030874">
    <property type="entry name" value="Cardiolipin_synth_Firmi"/>
</dbReference>
<dbReference type="InterPro" id="IPR022924">
    <property type="entry name" value="Cardiolipin_synthase"/>
</dbReference>
<dbReference type="InterPro" id="IPR027379">
    <property type="entry name" value="CLS_N"/>
</dbReference>
<dbReference type="InterPro" id="IPR025202">
    <property type="entry name" value="PLD-like_dom"/>
</dbReference>
<dbReference type="InterPro" id="IPR001736">
    <property type="entry name" value="PLipase_D/transphosphatidylase"/>
</dbReference>
<dbReference type="NCBIfam" id="TIGR04265">
    <property type="entry name" value="bac_cardiolipin"/>
    <property type="match status" value="1"/>
</dbReference>
<dbReference type="PANTHER" id="PTHR21248">
    <property type="entry name" value="CARDIOLIPIN SYNTHASE"/>
    <property type="match status" value="1"/>
</dbReference>
<dbReference type="PANTHER" id="PTHR21248:SF22">
    <property type="entry name" value="PHOSPHOLIPASE D"/>
    <property type="match status" value="1"/>
</dbReference>
<dbReference type="Pfam" id="PF13091">
    <property type="entry name" value="PLDc_2"/>
    <property type="match status" value="2"/>
</dbReference>
<dbReference type="Pfam" id="PF13396">
    <property type="entry name" value="PLDc_N"/>
    <property type="match status" value="1"/>
</dbReference>
<dbReference type="SMART" id="SM00155">
    <property type="entry name" value="PLDc"/>
    <property type="match status" value="2"/>
</dbReference>
<dbReference type="SUPFAM" id="SSF56024">
    <property type="entry name" value="Phospholipase D/nuclease"/>
    <property type="match status" value="2"/>
</dbReference>
<dbReference type="PROSITE" id="PS50035">
    <property type="entry name" value="PLD"/>
    <property type="match status" value="2"/>
</dbReference>
<comment type="function">
    <text evidence="1">Catalyzes the reversible phosphatidyl group transfer from one phosphatidylglycerol molecule to another to form cardiolipin (CL) (diphosphatidylglycerol) and glycerol.</text>
</comment>
<comment type="catalytic activity">
    <reaction evidence="1">
        <text>2 a 1,2-diacyl-sn-glycero-3-phospho-(1'-sn-glycerol) = a cardiolipin + glycerol</text>
        <dbReference type="Rhea" id="RHEA:31451"/>
        <dbReference type="ChEBI" id="CHEBI:17754"/>
        <dbReference type="ChEBI" id="CHEBI:62237"/>
        <dbReference type="ChEBI" id="CHEBI:64716"/>
    </reaction>
</comment>
<comment type="subcellular location">
    <subcellularLocation>
        <location evidence="1">Cell membrane</location>
        <topology evidence="1">Multi-pass membrane protein</topology>
    </subcellularLocation>
</comment>
<comment type="similarity">
    <text evidence="1">Belongs to the phospholipase D family. Cardiolipin synthase subfamily.</text>
</comment>
<comment type="sequence caution" evidence="2">
    <conflict type="erroneous initiation">
        <sequence resource="EMBL-CDS" id="AAO05286"/>
    </conflict>
</comment>
<protein>
    <recommendedName>
        <fullName evidence="1">Cardiolipin synthase 2</fullName>
        <shortName evidence="1">CL synthase 2</shortName>
        <ecNumber evidence="1">2.7.8.-</ecNumber>
    </recommendedName>
</protein>
<sequence>MALHQSNIIINILLVSAFLLNLVFAFIIIFMERRTANSIWAWLLVLVFLPLVGFILYLLLGRQIQREHIFKLAKEDKVGLEMIVDEQLEALKKQDFSKGNHQIVKFKEMVQMLLYNNAAFLTTDNDLTIYTDGHQKFDDLINDIRHAQSYIHIQYYIIHSDNLGKQLLHELEKKAEEGIEVKMLYDDMGSRDLRKKDLKKFRQKGGHAESFFPSKLPLINLRMNNRNHRKIVVIDGTIGYVGGFNVGDEYIGKSKKFGYWRDTHLRIKGDAVNALQLRFILDWNSQSTRDNLTYESRYFPDVDSGGTIGIQIASSGPDEDWEQIKYGYLKMISSAKESIYIQSPYFIPDQAFLDSIKIAALGGVDVNIMVPNKRDHPFVYWATLKNVASLLEAGVNVYHYDNGFLHSKTLVIDDEVASVGTANMDNRSFTLNFEVNAFIYDEGVARSLKQAFINDMKLSNKLTSEEYAKRNLLVKFKEGISQLLSPIL</sequence>
<gene>
    <name type="primary">cls2</name>
    <name type="ordered locus">SE_1687</name>
</gene>
<keyword id="KW-1003">Cell membrane</keyword>
<keyword id="KW-0444">Lipid biosynthesis</keyword>
<keyword id="KW-0443">Lipid metabolism</keyword>
<keyword id="KW-0472">Membrane</keyword>
<keyword id="KW-0594">Phospholipid biosynthesis</keyword>
<keyword id="KW-1208">Phospholipid metabolism</keyword>
<keyword id="KW-0677">Repeat</keyword>
<keyword id="KW-0808">Transferase</keyword>
<keyword id="KW-0812">Transmembrane</keyword>
<keyword id="KW-1133">Transmembrane helix</keyword>
<accession>Q8CNK3</accession>
<reference key="1">
    <citation type="journal article" date="2003" name="Mol. Microbiol.">
        <title>Genome-based analysis of virulence genes in a non-biofilm-forming Staphylococcus epidermidis strain (ATCC 12228).</title>
        <authorList>
            <person name="Zhang Y.-Q."/>
            <person name="Ren S.-X."/>
            <person name="Li H.-L."/>
            <person name="Wang Y.-X."/>
            <person name="Fu G."/>
            <person name="Yang J."/>
            <person name="Qin Z.-Q."/>
            <person name="Miao Y.-G."/>
            <person name="Wang W.-Y."/>
            <person name="Chen R.-S."/>
            <person name="Shen Y."/>
            <person name="Chen Z."/>
            <person name="Yuan Z.-H."/>
            <person name="Zhao G.-P."/>
            <person name="Qu D."/>
            <person name="Danchin A."/>
            <person name="Wen Y.-M."/>
        </authorList>
    </citation>
    <scope>NUCLEOTIDE SEQUENCE [LARGE SCALE GENOMIC DNA]</scope>
    <source>
        <strain>ATCC 12228 / FDA PCI 1200</strain>
    </source>
</reference>